<gene>
    <name type="primary">Saxo2</name>
    <name type="synonym">Fam154b</name>
</gene>
<organism>
    <name type="scientific">Mus musculus</name>
    <name type="common">Mouse</name>
    <dbReference type="NCBI Taxonomy" id="10090"/>
    <lineage>
        <taxon>Eukaryota</taxon>
        <taxon>Metazoa</taxon>
        <taxon>Chordata</taxon>
        <taxon>Craniata</taxon>
        <taxon>Vertebrata</taxon>
        <taxon>Euteleostomi</taxon>
        <taxon>Mammalia</taxon>
        <taxon>Eutheria</taxon>
        <taxon>Euarchontoglires</taxon>
        <taxon>Glires</taxon>
        <taxon>Rodentia</taxon>
        <taxon>Myomorpha</taxon>
        <taxon>Muroidea</taxon>
        <taxon>Muridae</taxon>
        <taxon>Murinae</taxon>
        <taxon>Mus</taxon>
        <taxon>Mus</taxon>
    </lineage>
</organism>
<comment type="similarity">
    <text evidence="2">Belongs to the FAM154 family.</text>
</comment>
<proteinExistence type="evidence at transcript level"/>
<evidence type="ECO:0000250" key="1">
    <source>
        <dbReference type="UniProtKB" id="Q658L1"/>
    </source>
</evidence>
<evidence type="ECO:0000305" key="2"/>
<name>SAXO2_MOUSE</name>
<feature type="chain" id="PRO_0000321840" description="Stabilizer of axonemal microtubules 2">
    <location>
        <begin position="1"/>
        <end position="394"/>
    </location>
</feature>
<feature type="region of interest" description="Mn 1" evidence="1">
    <location>
        <begin position="110"/>
        <end position="122"/>
    </location>
</feature>
<feature type="region of interest" description="Mn 2" evidence="1">
    <location>
        <begin position="144"/>
        <end position="158"/>
    </location>
</feature>
<feature type="region of interest" description="Mn 3" evidence="1">
    <location>
        <begin position="244"/>
        <end position="256"/>
    </location>
</feature>
<feature type="region of interest" description="Mn 4" evidence="1">
    <location>
        <begin position="278"/>
        <end position="292"/>
    </location>
</feature>
<feature type="region of interest" description="Mn 5" evidence="1">
    <location>
        <begin position="312"/>
        <end position="324"/>
    </location>
</feature>
<feature type="region of interest" description="Mn 6" evidence="1">
    <location>
        <begin position="346"/>
        <end position="360"/>
    </location>
</feature>
<feature type="sequence conflict" description="In Ref. 1; BAC34522." evidence="2" ref="1">
    <original>F</original>
    <variation>L</variation>
    <location>
        <position position="49"/>
    </location>
</feature>
<dbReference type="EMBL" id="AK051095">
    <property type="protein sequence ID" value="BAC34522.1"/>
    <property type="molecule type" value="mRNA"/>
</dbReference>
<dbReference type="EMBL" id="AC138270">
    <property type="status" value="NOT_ANNOTATED_CDS"/>
    <property type="molecule type" value="Genomic_DNA"/>
</dbReference>
<dbReference type="EMBL" id="CH466543">
    <property type="protein sequence ID" value="EDL06900.1"/>
    <property type="molecule type" value="Genomic_DNA"/>
</dbReference>
<dbReference type="CCDS" id="CCDS21409.1"/>
<dbReference type="RefSeq" id="NP_808562.3">
    <property type="nucleotide sequence ID" value="NM_177894.4"/>
</dbReference>
<dbReference type="FunCoup" id="Q8BQB6">
    <property type="interactions" value="187"/>
</dbReference>
<dbReference type="STRING" id="10090.ENSMUSP00000057993"/>
<dbReference type="iPTMnet" id="Q8BQB6"/>
<dbReference type="PhosphoSitePlus" id="Q8BQB6"/>
<dbReference type="PaxDb" id="10090-ENSMUSP00000057993"/>
<dbReference type="ProteomicsDB" id="256708"/>
<dbReference type="Antibodypedia" id="52475">
    <property type="antibodies" value="28 antibodies from 11 providers"/>
</dbReference>
<dbReference type="DNASU" id="330577"/>
<dbReference type="Ensembl" id="ENSMUST00000056728.5">
    <property type="protein sequence ID" value="ENSMUSP00000057993.4"/>
    <property type="gene ID" value="ENSMUSG00000038570.16"/>
</dbReference>
<dbReference type="GeneID" id="330577"/>
<dbReference type="KEGG" id="mmu:330577"/>
<dbReference type="UCSC" id="uc009idb.1">
    <property type="organism name" value="mouse"/>
</dbReference>
<dbReference type="AGR" id="MGI:1914618"/>
<dbReference type="CTD" id="283726"/>
<dbReference type="MGI" id="MGI:1914618">
    <property type="gene designation" value="Saxo2"/>
</dbReference>
<dbReference type="VEuPathDB" id="HostDB:ENSMUSG00000038570"/>
<dbReference type="eggNOG" id="ENOG502QWHB">
    <property type="taxonomic scope" value="Eukaryota"/>
</dbReference>
<dbReference type="GeneTree" id="ENSGT00390000007252"/>
<dbReference type="HOGENOM" id="CLU_047658_0_0_1"/>
<dbReference type="InParanoid" id="Q8BQB6"/>
<dbReference type="OMA" id="HVDICPA"/>
<dbReference type="OrthoDB" id="365640at2759"/>
<dbReference type="PhylomeDB" id="Q8BQB6"/>
<dbReference type="TreeFam" id="TF319394"/>
<dbReference type="BioGRID-ORCS" id="330577">
    <property type="hits" value="1 hit in 78 CRISPR screens"/>
</dbReference>
<dbReference type="PRO" id="PR:Q8BQB6"/>
<dbReference type="Proteomes" id="UP000000589">
    <property type="component" value="Chromosome 7"/>
</dbReference>
<dbReference type="RNAct" id="Q8BQB6">
    <property type="molecule type" value="protein"/>
</dbReference>
<dbReference type="Bgee" id="ENSMUSG00000038570">
    <property type="expression patterns" value="Expressed in spermatid and 104 other cell types or tissues"/>
</dbReference>
<dbReference type="ExpressionAtlas" id="Q8BQB6">
    <property type="expression patterns" value="baseline and differential"/>
</dbReference>
<dbReference type="GO" id="GO:0005634">
    <property type="term" value="C:nucleus"/>
    <property type="evidence" value="ECO:0000314"/>
    <property type="project" value="MGI"/>
</dbReference>
<dbReference type="GO" id="GO:0008017">
    <property type="term" value="F:microtubule binding"/>
    <property type="evidence" value="ECO:0007669"/>
    <property type="project" value="InterPro"/>
</dbReference>
<dbReference type="InterPro" id="IPR033336">
    <property type="entry name" value="SAXO1/2"/>
</dbReference>
<dbReference type="PANTHER" id="PTHR31516">
    <property type="entry name" value="STABILIZER OF AXONEMAL MICROTUBULES 2"/>
    <property type="match status" value="1"/>
</dbReference>
<dbReference type="PANTHER" id="PTHR31516:SF6">
    <property type="entry name" value="STABILIZER OF AXONEMAL MICROTUBULES 2"/>
    <property type="match status" value="1"/>
</dbReference>
<dbReference type="Pfam" id="PF05217">
    <property type="entry name" value="SAXO1-2"/>
    <property type="match status" value="1"/>
</dbReference>
<accession>Q8BQB6</accession>
<accession>G3X9C9</accession>
<keyword id="KW-1185">Reference proteome</keyword>
<sequence length="394" mass="45533">MRNWCLCQICTCGSDYRPYEIVKQPRHIPEEYKPKQGKIDLGTTYKRDFNPYKVQPLIKVRPVERQQVKKGKLDTVPTYKDDYRSWDIQKCELCKPEQAYHPPDVKFGNSTTFQDDYVPQEIKPRQSFKPCSVVKCSVGPFNGDTSHRRDYVPHQLEVKFARPKEIYKPTDQPFEDLTTHRNDFQGLAGETAKICRPAYTRVTQNIQFKGSTEFRDSFQPWEIPPPKVKKVAEYVPPSGSMQLNSTSHLDYVPYQASRVVAIRPVSHRRQSNFPFQGKSTTKEDFPAWEICRQGLIKQQQQIPNPSGKFEGLSTFRSHFVPHELIPTESCKPLNEALKSSVPLDDVTMYSIQFTPKKQEICPASYPSPPGYIFENTNSQGHKFFRKIIPAVKAF</sequence>
<reference key="1">
    <citation type="journal article" date="2005" name="Science">
        <title>The transcriptional landscape of the mammalian genome.</title>
        <authorList>
            <person name="Carninci P."/>
            <person name="Kasukawa T."/>
            <person name="Katayama S."/>
            <person name="Gough J."/>
            <person name="Frith M.C."/>
            <person name="Maeda N."/>
            <person name="Oyama R."/>
            <person name="Ravasi T."/>
            <person name="Lenhard B."/>
            <person name="Wells C."/>
            <person name="Kodzius R."/>
            <person name="Shimokawa K."/>
            <person name="Bajic V.B."/>
            <person name="Brenner S.E."/>
            <person name="Batalov S."/>
            <person name="Forrest A.R."/>
            <person name="Zavolan M."/>
            <person name="Davis M.J."/>
            <person name="Wilming L.G."/>
            <person name="Aidinis V."/>
            <person name="Allen J.E."/>
            <person name="Ambesi-Impiombato A."/>
            <person name="Apweiler R."/>
            <person name="Aturaliya R.N."/>
            <person name="Bailey T.L."/>
            <person name="Bansal M."/>
            <person name="Baxter L."/>
            <person name="Beisel K.W."/>
            <person name="Bersano T."/>
            <person name="Bono H."/>
            <person name="Chalk A.M."/>
            <person name="Chiu K.P."/>
            <person name="Choudhary V."/>
            <person name="Christoffels A."/>
            <person name="Clutterbuck D.R."/>
            <person name="Crowe M.L."/>
            <person name="Dalla E."/>
            <person name="Dalrymple B.P."/>
            <person name="de Bono B."/>
            <person name="Della Gatta G."/>
            <person name="di Bernardo D."/>
            <person name="Down T."/>
            <person name="Engstrom P."/>
            <person name="Fagiolini M."/>
            <person name="Faulkner G."/>
            <person name="Fletcher C.F."/>
            <person name="Fukushima T."/>
            <person name="Furuno M."/>
            <person name="Futaki S."/>
            <person name="Gariboldi M."/>
            <person name="Georgii-Hemming P."/>
            <person name="Gingeras T.R."/>
            <person name="Gojobori T."/>
            <person name="Green R.E."/>
            <person name="Gustincich S."/>
            <person name="Harbers M."/>
            <person name="Hayashi Y."/>
            <person name="Hensch T.K."/>
            <person name="Hirokawa N."/>
            <person name="Hill D."/>
            <person name="Huminiecki L."/>
            <person name="Iacono M."/>
            <person name="Ikeo K."/>
            <person name="Iwama A."/>
            <person name="Ishikawa T."/>
            <person name="Jakt M."/>
            <person name="Kanapin A."/>
            <person name="Katoh M."/>
            <person name="Kawasawa Y."/>
            <person name="Kelso J."/>
            <person name="Kitamura H."/>
            <person name="Kitano H."/>
            <person name="Kollias G."/>
            <person name="Krishnan S.P."/>
            <person name="Kruger A."/>
            <person name="Kummerfeld S.K."/>
            <person name="Kurochkin I.V."/>
            <person name="Lareau L.F."/>
            <person name="Lazarevic D."/>
            <person name="Lipovich L."/>
            <person name="Liu J."/>
            <person name="Liuni S."/>
            <person name="McWilliam S."/>
            <person name="Madan Babu M."/>
            <person name="Madera M."/>
            <person name="Marchionni L."/>
            <person name="Matsuda H."/>
            <person name="Matsuzawa S."/>
            <person name="Miki H."/>
            <person name="Mignone F."/>
            <person name="Miyake S."/>
            <person name="Morris K."/>
            <person name="Mottagui-Tabar S."/>
            <person name="Mulder N."/>
            <person name="Nakano N."/>
            <person name="Nakauchi H."/>
            <person name="Ng P."/>
            <person name="Nilsson R."/>
            <person name="Nishiguchi S."/>
            <person name="Nishikawa S."/>
            <person name="Nori F."/>
            <person name="Ohara O."/>
            <person name="Okazaki Y."/>
            <person name="Orlando V."/>
            <person name="Pang K.C."/>
            <person name="Pavan W.J."/>
            <person name="Pavesi G."/>
            <person name="Pesole G."/>
            <person name="Petrovsky N."/>
            <person name="Piazza S."/>
            <person name="Reed J."/>
            <person name="Reid J.F."/>
            <person name="Ring B.Z."/>
            <person name="Ringwald M."/>
            <person name="Rost B."/>
            <person name="Ruan Y."/>
            <person name="Salzberg S.L."/>
            <person name="Sandelin A."/>
            <person name="Schneider C."/>
            <person name="Schoenbach C."/>
            <person name="Sekiguchi K."/>
            <person name="Semple C.A."/>
            <person name="Seno S."/>
            <person name="Sessa L."/>
            <person name="Sheng Y."/>
            <person name="Shibata Y."/>
            <person name="Shimada H."/>
            <person name="Shimada K."/>
            <person name="Silva D."/>
            <person name="Sinclair B."/>
            <person name="Sperling S."/>
            <person name="Stupka E."/>
            <person name="Sugiura K."/>
            <person name="Sultana R."/>
            <person name="Takenaka Y."/>
            <person name="Taki K."/>
            <person name="Tammoja K."/>
            <person name="Tan S.L."/>
            <person name="Tang S."/>
            <person name="Taylor M.S."/>
            <person name="Tegner J."/>
            <person name="Teichmann S.A."/>
            <person name="Ueda H.R."/>
            <person name="van Nimwegen E."/>
            <person name="Verardo R."/>
            <person name="Wei C.L."/>
            <person name="Yagi K."/>
            <person name="Yamanishi H."/>
            <person name="Zabarovsky E."/>
            <person name="Zhu S."/>
            <person name="Zimmer A."/>
            <person name="Hide W."/>
            <person name="Bult C."/>
            <person name="Grimmond S.M."/>
            <person name="Teasdale R.D."/>
            <person name="Liu E.T."/>
            <person name="Brusic V."/>
            <person name="Quackenbush J."/>
            <person name="Wahlestedt C."/>
            <person name="Mattick J.S."/>
            <person name="Hume D.A."/>
            <person name="Kai C."/>
            <person name="Sasaki D."/>
            <person name="Tomaru Y."/>
            <person name="Fukuda S."/>
            <person name="Kanamori-Katayama M."/>
            <person name="Suzuki M."/>
            <person name="Aoki J."/>
            <person name="Arakawa T."/>
            <person name="Iida J."/>
            <person name="Imamura K."/>
            <person name="Itoh M."/>
            <person name="Kato T."/>
            <person name="Kawaji H."/>
            <person name="Kawagashira N."/>
            <person name="Kawashima T."/>
            <person name="Kojima M."/>
            <person name="Kondo S."/>
            <person name="Konno H."/>
            <person name="Nakano K."/>
            <person name="Ninomiya N."/>
            <person name="Nishio T."/>
            <person name="Okada M."/>
            <person name="Plessy C."/>
            <person name="Shibata K."/>
            <person name="Shiraki T."/>
            <person name="Suzuki S."/>
            <person name="Tagami M."/>
            <person name="Waki K."/>
            <person name="Watahiki A."/>
            <person name="Okamura-Oho Y."/>
            <person name="Suzuki H."/>
            <person name="Kawai J."/>
            <person name="Hayashizaki Y."/>
        </authorList>
    </citation>
    <scope>NUCLEOTIDE SEQUENCE [LARGE SCALE MRNA]</scope>
    <source>
        <strain>C57BL/6J</strain>
        <tissue>Embryo</tissue>
    </source>
</reference>
<reference key="2">
    <citation type="journal article" date="2009" name="PLoS Biol.">
        <title>Lineage-specific biology revealed by a finished genome assembly of the mouse.</title>
        <authorList>
            <person name="Church D.M."/>
            <person name="Goodstadt L."/>
            <person name="Hillier L.W."/>
            <person name="Zody M.C."/>
            <person name="Goldstein S."/>
            <person name="She X."/>
            <person name="Bult C.J."/>
            <person name="Agarwala R."/>
            <person name="Cherry J.L."/>
            <person name="DiCuccio M."/>
            <person name="Hlavina W."/>
            <person name="Kapustin Y."/>
            <person name="Meric P."/>
            <person name="Maglott D."/>
            <person name="Birtle Z."/>
            <person name="Marques A.C."/>
            <person name="Graves T."/>
            <person name="Zhou S."/>
            <person name="Teague B."/>
            <person name="Potamousis K."/>
            <person name="Churas C."/>
            <person name="Place M."/>
            <person name="Herschleb J."/>
            <person name="Runnheim R."/>
            <person name="Forrest D."/>
            <person name="Amos-Landgraf J."/>
            <person name="Schwartz D.C."/>
            <person name="Cheng Z."/>
            <person name="Lindblad-Toh K."/>
            <person name="Eichler E.E."/>
            <person name="Ponting C.P."/>
        </authorList>
    </citation>
    <scope>NUCLEOTIDE SEQUENCE [LARGE SCALE GENOMIC DNA]</scope>
    <source>
        <strain>C57BL/6J</strain>
    </source>
</reference>
<reference key="3">
    <citation type="submission" date="2005-07" db="EMBL/GenBank/DDBJ databases">
        <authorList>
            <person name="Mural R.J."/>
            <person name="Adams M.D."/>
            <person name="Myers E.W."/>
            <person name="Smith H.O."/>
            <person name="Venter J.C."/>
        </authorList>
    </citation>
    <scope>NUCLEOTIDE SEQUENCE [LARGE SCALE GENOMIC DNA]</scope>
</reference>
<protein>
    <recommendedName>
        <fullName>Stabilizer of axonemal microtubules 2</fullName>
    </recommendedName>
</protein>